<protein>
    <recommendedName>
        <fullName evidence="1">UPF0502 protein Shew185_1758</fullName>
    </recommendedName>
</protein>
<reference key="1">
    <citation type="submission" date="2007-07" db="EMBL/GenBank/DDBJ databases">
        <title>Complete sequence of chromosome of Shewanella baltica OS185.</title>
        <authorList>
            <consortium name="US DOE Joint Genome Institute"/>
            <person name="Copeland A."/>
            <person name="Lucas S."/>
            <person name="Lapidus A."/>
            <person name="Barry K."/>
            <person name="Glavina del Rio T."/>
            <person name="Dalin E."/>
            <person name="Tice H."/>
            <person name="Pitluck S."/>
            <person name="Sims D."/>
            <person name="Brettin T."/>
            <person name="Bruce D."/>
            <person name="Detter J.C."/>
            <person name="Han C."/>
            <person name="Schmutz J."/>
            <person name="Larimer F."/>
            <person name="Land M."/>
            <person name="Hauser L."/>
            <person name="Kyrpides N."/>
            <person name="Mikhailova N."/>
            <person name="Brettar I."/>
            <person name="Rodrigues J."/>
            <person name="Konstantinidis K."/>
            <person name="Tiedje J."/>
            <person name="Richardson P."/>
        </authorList>
    </citation>
    <scope>NUCLEOTIDE SEQUENCE [LARGE SCALE GENOMIC DNA]</scope>
    <source>
        <strain>OS185</strain>
    </source>
</reference>
<sequence>MELTLHEARVIGCLLEKEITTPEQYPLSLNSLTLACNQKTSREPVLELSETQVQIAVDSLNRKRLISEQSGFGSRVVKYKHRFCNTEFSELQLSAAALAIVCLLLLRGPQTPGELRTRSNRLHEFKDVIEVEDCIRQLMNREKPFLKQLPREAGRRESRYVELFSAASSQLETAQPESASHTVAHVAVSLDAEPLELTKRVTELEQQVAELTQKLDELIASLS</sequence>
<comment type="similarity">
    <text evidence="1">Belongs to the UPF0502 family.</text>
</comment>
<feature type="chain" id="PRO_1000069304" description="UPF0502 protein Shew185_1758">
    <location>
        <begin position="1"/>
        <end position="223"/>
    </location>
</feature>
<proteinExistence type="inferred from homology"/>
<gene>
    <name type="ordered locus">Shew185_1758</name>
</gene>
<name>Y1758_SHEB8</name>
<accession>A6WM62</accession>
<dbReference type="EMBL" id="CP000753">
    <property type="protein sequence ID" value="ABS07901.1"/>
    <property type="molecule type" value="Genomic_DNA"/>
</dbReference>
<dbReference type="RefSeq" id="WP_012088909.1">
    <property type="nucleotide sequence ID" value="NC_009665.1"/>
</dbReference>
<dbReference type="SMR" id="A6WM62"/>
<dbReference type="KEGG" id="sbm:Shew185_1758"/>
<dbReference type="HOGENOM" id="CLU_057831_2_0_6"/>
<dbReference type="Gene3D" id="1.10.10.10">
    <property type="entry name" value="Winged helix-like DNA-binding domain superfamily/Winged helix DNA-binding domain"/>
    <property type="match status" value="2"/>
</dbReference>
<dbReference type="HAMAP" id="MF_01584">
    <property type="entry name" value="UPF0502"/>
    <property type="match status" value="1"/>
</dbReference>
<dbReference type="InterPro" id="IPR007432">
    <property type="entry name" value="DUF480"/>
</dbReference>
<dbReference type="InterPro" id="IPR036388">
    <property type="entry name" value="WH-like_DNA-bd_sf"/>
</dbReference>
<dbReference type="InterPro" id="IPR036390">
    <property type="entry name" value="WH_DNA-bd_sf"/>
</dbReference>
<dbReference type="PANTHER" id="PTHR38768">
    <property type="entry name" value="UPF0502 PROTEIN YCEH"/>
    <property type="match status" value="1"/>
</dbReference>
<dbReference type="PANTHER" id="PTHR38768:SF1">
    <property type="entry name" value="UPF0502 PROTEIN YCEH"/>
    <property type="match status" value="1"/>
</dbReference>
<dbReference type="Pfam" id="PF04337">
    <property type="entry name" value="DUF480"/>
    <property type="match status" value="1"/>
</dbReference>
<dbReference type="SUPFAM" id="SSF46785">
    <property type="entry name" value="Winged helix' DNA-binding domain"/>
    <property type="match status" value="2"/>
</dbReference>
<evidence type="ECO:0000255" key="1">
    <source>
        <dbReference type="HAMAP-Rule" id="MF_01584"/>
    </source>
</evidence>
<organism>
    <name type="scientific">Shewanella baltica (strain OS185)</name>
    <dbReference type="NCBI Taxonomy" id="402882"/>
    <lineage>
        <taxon>Bacteria</taxon>
        <taxon>Pseudomonadati</taxon>
        <taxon>Pseudomonadota</taxon>
        <taxon>Gammaproteobacteria</taxon>
        <taxon>Alteromonadales</taxon>
        <taxon>Shewanellaceae</taxon>
        <taxon>Shewanella</taxon>
    </lineage>
</organism>